<organism>
    <name type="scientific">Xenopus laevis</name>
    <name type="common">African clawed frog</name>
    <dbReference type="NCBI Taxonomy" id="8355"/>
    <lineage>
        <taxon>Eukaryota</taxon>
        <taxon>Metazoa</taxon>
        <taxon>Chordata</taxon>
        <taxon>Craniata</taxon>
        <taxon>Vertebrata</taxon>
        <taxon>Euteleostomi</taxon>
        <taxon>Amphibia</taxon>
        <taxon>Batrachia</taxon>
        <taxon>Anura</taxon>
        <taxon>Pipoidea</taxon>
        <taxon>Pipidae</taxon>
        <taxon>Xenopodinae</taxon>
        <taxon>Xenopus</taxon>
        <taxon>Xenopus</taxon>
    </lineage>
</organism>
<name>AS1AA_XENLA</name>
<keyword id="KW-0143">Chaperone</keyword>
<keyword id="KW-0156">Chromatin regulator</keyword>
<keyword id="KW-0539">Nucleus</keyword>
<keyword id="KW-1185">Reference proteome</keyword>
<keyword id="KW-0804">Transcription</keyword>
<keyword id="KW-0805">Transcription regulation</keyword>
<sequence length="201" mass="22837">MAKVQVNNVVVLDNPSPFYNPFQFEITFECIEDLSEDLEWKIIYVGSAESEEYDQVLDSVLVGPVPAGRHMFVFQADAPNPGLIPDADAVGVTVVLITCTYRGQEFIRVGYYVNNEYTETELRENPPVKPDFSKLQRNILASNPRVTRFHINWEENTEKLDDSNPHMHPVLSIEARPSASKGWPMSENSLNVMLESHMDCM</sequence>
<gene>
    <name type="primary">asf1aa</name>
    <name type="synonym">asf1</name>
    <name type="synonym">asf1a</name>
</gene>
<dbReference type="EMBL" id="AY351903">
    <property type="protein sequence ID" value="AAR08148.1"/>
    <property type="molecule type" value="mRNA"/>
</dbReference>
<dbReference type="EMBL" id="BC170073">
    <property type="protein sequence ID" value="AAI70073.1"/>
    <property type="molecule type" value="mRNA"/>
</dbReference>
<dbReference type="EMBL" id="BC170075">
    <property type="protein sequence ID" value="AAI70075.1"/>
    <property type="molecule type" value="mRNA"/>
</dbReference>
<dbReference type="RefSeq" id="NP_001086449.1">
    <property type="nucleotide sequence ID" value="NM_001092980.1"/>
</dbReference>
<dbReference type="BMRB" id="Q69DB9"/>
<dbReference type="SMR" id="Q69DB9"/>
<dbReference type="BioGRID" id="103120">
    <property type="interactions" value="2"/>
</dbReference>
<dbReference type="GeneID" id="446260"/>
<dbReference type="KEGG" id="xla:446260"/>
<dbReference type="AGR" id="Xenbase:XB-GENE-949299"/>
<dbReference type="CTD" id="446260"/>
<dbReference type="Xenbase" id="XB-GENE-949299">
    <property type="gene designation" value="asf1a.L"/>
</dbReference>
<dbReference type="OMA" id="DYADQEM"/>
<dbReference type="OrthoDB" id="29755at2759"/>
<dbReference type="Proteomes" id="UP000186698">
    <property type="component" value="Chromosome 5L"/>
</dbReference>
<dbReference type="Bgee" id="446260">
    <property type="expression patterns" value="Expressed in egg cell and 18 other cell types or tissues"/>
</dbReference>
<dbReference type="GO" id="GO:0000785">
    <property type="term" value="C:chromatin"/>
    <property type="evidence" value="ECO:0000318"/>
    <property type="project" value="GO_Central"/>
</dbReference>
<dbReference type="GO" id="GO:0005634">
    <property type="term" value="C:nucleus"/>
    <property type="evidence" value="ECO:0000318"/>
    <property type="project" value="GO_Central"/>
</dbReference>
<dbReference type="GO" id="GO:0042393">
    <property type="term" value="F:histone binding"/>
    <property type="evidence" value="ECO:0000318"/>
    <property type="project" value="GO_Central"/>
</dbReference>
<dbReference type="GO" id="GO:0006335">
    <property type="term" value="P:DNA replication-dependent chromatin assembly"/>
    <property type="evidence" value="ECO:0000318"/>
    <property type="project" value="GO_Central"/>
</dbReference>
<dbReference type="FunFam" id="2.60.40.1490:FF:000001">
    <property type="entry name" value="Histone chaperone ASF1"/>
    <property type="match status" value="1"/>
</dbReference>
<dbReference type="Gene3D" id="2.60.40.1490">
    <property type="entry name" value="Histone chaperone ASF1-like"/>
    <property type="match status" value="1"/>
</dbReference>
<dbReference type="InterPro" id="IPR006818">
    <property type="entry name" value="ASF1-like"/>
</dbReference>
<dbReference type="InterPro" id="IPR036747">
    <property type="entry name" value="ASF1-like_sf"/>
</dbReference>
<dbReference type="PANTHER" id="PTHR12040">
    <property type="entry name" value="ANTI-SILENCING PROTEIN 1"/>
    <property type="match status" value="1"/>
</dbReference>
<dbReference type="PANTHER" id="PTHR12040:SF8">
    <property type="entry name" value="HISTONE CHAPERONE ASF1A"/>
    <property type="match status" value="1"/>
</dbReference>
<dbReference type="Pfam" id="PF04729">
    <property type="entry name" value="ASF1_hist_chap"/>
    <property type="match status" value="1"/>
</dbReference>
<dbReference type="SUPFAM" id="SSF101546">
    <property type="entry name" value="ASF1-like"/>
    <property type="match status" value="1"/>
</dbReference>
<feature type="chain" id="PRO_0000284020" description="Histone chaperone asf1a-A">
    <location>
        <begin position="1"/>
        <end position="201"/>
    </location>
</feature>
<evidence type="ECO:0000250" key="1">
    <source>
        <dbReference type="UniProtKB" id="Q9Y294"/>
    </source>
</evidence>
<evidence type="ECO:0000269" key="2">
    <source>
    </source>
</evidence>
<evidence type="ECO:0000305" key="3"/>
<proteinExistence type="evidence at protein level"/>
<reference key="1">
    <citation type="journal article" date="2007" name="Chromosoma">
        <title>The histone chaperone Asf1 is dispensable for direct de novo histone deposition in Xenopus egg extracts.</title>
        <authorList>
            <person name="Ray-Gallet D."/>
            <person name="Quivy J.P."/>
            <person name="Sillje H.W."/>
            <person name="Nigg E.A."/>
            <person name="Almouzni G."/>
        </authorList>
    </citation>
    <scope>NUCLEOTIDE SEQUENCE [MRNA]</scope>
    <scope>FUNCTION</scope>
    <scope>INTERACTION WITH HIRA AND P60</scope>
    <source>
        <tissue>Oocyte</tissue>
    </source>
</reference>
<reference key="2">
    <citation type="submission" date="2008-11" db="EMBL/GenBank/DDBJ databases">
        <authorList>
            <consortium name="NIH - Xenopus Gene Collection (XGC) project"/>
        </authorList>
    </citation>
    <scope>NUCLEOTIDE SEQUENCE [LARGE SCALE MRNA]</scope>
    <source>
        <tissue>Oocyte</tissue>
    </source>
</reference>
<accession>Q69DB9</accession>
<accession>B7ZR80</accession>
<protein>
    <recommendedName>
        <fullName>Histone chaperone asf1a-A</fullName>
    </recommendedName>
    <alternativeName>
        <fullName>Anti-silencing function protein 1 homolog</fullName>
        <shortName>XAsf1</shortName>
    </alternativeName>
    <alternativeName>
        <fullName>Anti-silencing function protein 1 homolog A-A</fullName>
    </alternativeName>
</protein>
<comment type="function">
    <text evidence="1 2">Histone chaperone that facilitates histone deposition and histone exchange and removal during nucleosome assembly and disassembly (By similarity). Not critical for histone deposition during nucleosome assembly (PubMed:17576589).</text>
</comment>
<comment type="subunit">
    <text evidence="1 2">Interacts with histone H3 (including both histone H3.1 and H3.3) and histone H4 (By similarity). Interacts with hira and p60 (PubMed:17576589).</text>
</comment>
<comment type="subcellular location">
    <subcellularLocation>
        <location evidence="1">Nucleus</location>
    </subcellularLocation>
</comment>
<comment type="similarity">
    <text evidence="3">Belongs to the ASF1 family.</text>
</comment>